<proteinExistence type="evidence at transcript level"/>
<dbReference type="EMBL" id="AB060206">
    <property type="protein sequence ID" value="BAB41146.1"/>
    <property type="molecule type" value="mRNA"/>
</dbReference>
<dbReference type="RefSeq" id="NP_001306290.1">
    <property type="nucleotide sequence ID" value="NM_001319361.1"/>
</dbReference>
<dbReference type="SMR" id="Q9BE31"/>
<dbReference type="STRING" id="9541.ENSMFAP00000034105"/>
<dbReference type="eggNOG" id="KOG1450">
    <property type="taxonomic scope" value="Eukaryota"/>
</dbReference>
<dbReference type="Proteomes" id="UP000233100">
    <property type="component" value="Unplaced"/>
</dbReference>
<dbReference type="GO" id="GO:0005737">
    <property type="term" value="C:cytoplasm"/>
    <property type="evidence" value="ECO:0007669"/>
    <property type="project" value="TreeGrafter"/>
</dbReference>
<dbReference type="GO" id="GO:0001891">
    <property type="term" value="C:phagocytic cup"/>
    <property type="evidence" value="ECO:0000250"/>
    <property type="project" value="UniProtKB"/>
</dbReference>
<dbReference type="GO" id="GO:0005096">
    <property type="term" value="F:GTPase activator activity"/>
    <property type="evidence" value="ECO:0007669"/>
    <property type="project" value="UniProtKB-KW"/>
</dbReference>
<dbReference type="GO" id="GO:0007015">
    <property type="term" value="P:actin filament organization"/>
    <property type="evidence" value="ECO:0000250"/>
    <property type="project" value="UniProtKB"/>
</dbReference>
<dbReference type="GO" id="GO:0051058">
    <property type="term" value="P:negative regulation of small GTPase mediated signal transduction"/>
    <property type="evidence" value="ECO:0000250"/>
    <property type="project" value="UniProtKB"/>
</dbReference>
<dbReference type="GO" id="GO:0006911">
    <property type="term" value="P:phagocytosis, engulfment"/>
    <property type="evidence" value="ECO:0000250"/>
    <property type="project" value="UniProtKB"/>
</dbReference>
<dbReference type="GO" id="GO:0007165">
    <property type="term" value="P:signal transduction"/>
    <property type="evidence" value="ECO:0007669"/>
    <property type="project" value="InterPro"/>
</dbReference>
<dbReference type="CDD" id="cd13233">
    <property type="entry name" value="PH_ARHGAP9-like"/>
    <property type="match status" value="1"/>
</dbReference>
<dbReference type="CDD" id="cd04403">
    <property type="entry name" value="RhoGAP_ARHGAP27_15_12_9"/>
    <property type="match status" value="1"/>
</dbReference>
<dbReference type="CDD" id="cd12070">
    <property type="entry name" value="SH3_ARHGAP12"/>
    <property type="match status" value="1"/>
</dbReference>
<dbReference type="CDD" id="cd00201">
    <property type="entry name" value="WW"/>
    <property type="match status" value="1"/>
</dbReference>
<dbReference type="FunFam" id="1.10.555.10:FF:000003">
    <property type="entry name" value="Putative rho GTPase-activating protein 12"/>
    <property type="match status" value="1"/>
</dbReference>
<dbReference type="FunFam" id="2.20.70.10:FF:000024">
    <property type="entry name" value="Rho GTPase activating protein 12"/>
    <property type="match status" value="1"/>
</dbReference>
<dbReference type="FunFam" id="2.30.29.30:FF:000100">
    <property type="entry name" value="Rho GTPase activating protein 12"/>
    <property type="match status" value="1"/>
</dbReference>
<dbReference type="FunFam" id="2.30.30.40:FF:000056">
    <property type="entry name" value="rho GTPase-activating protein 12 isoform X1"/>
    <property type="match status" value="1"/>
</dbReference>
<dbReference type="Gene3D" id="2.20.70.10">
    <property type="match status" value="1"/>
</dbReference>
<dbReference type="Gene3D" id="2.30.29.30">
    <property type="entry name" value="Pleckstrin-homology domain (PH domain)/Phosphotyrosine-binding domain (PTB)"/>
    <property type="match status" value="1"/>
</dbReference>
<dbReference type="Gene3D" id="1.10.555.10">
    <property type="entry name" value="Rho GTPase activation protein"/>
    <property type="match status" value="1"/>
</dbReference>
<dbReference type="Gene3D" id="2.30.30.40">
    <property type="entry name" value="SH3 Domains"/>
    <property type="match status" value="1"/>
</dbReference>
<dbReference type="InterPro" id="IPR035491">
    <property type="entry name" value="ARHGAP12_SH3"/>
</dbReference>
<dbReference type="InterPro" id="IPR011993">
    <property type="entry name" value="PH-like_dom_sf"/>
</dbReference>
<dbReference type="InterPro" id="IPR001849">
    <property type="entry name" value="PH_domain"/>
</dbReference>
<dbReference type="InterPro" id="IPR050729">
    <property type="entry name" value="Rho-GAP"/>
</dbReference>
<dbReference type="InterPro" id="IPR008936">
    <property type="entry name" value="Rho_GTPase_activation_prot"/>
</dbReference>
<dbReference type="InterPro" id="IPR000198">
    <property type="entry name" value="RhoGAP_dom"/>
</dbReference>
<dbReference type="InterPro" id="IPR036028">
    <property type="entry name" value="SH3-like_dom_sf"/>
</dbReference>
<dbReference type="InterPro" id="IPR001452">
    <property type="entry name" value="SH3_domain"/>
</dbReference>
<dbReference type="InterPro" id="IPR001202">
    <property type="entry name" value="WW_dom"/>
</dbReference>
<dbReference type="InterPro" id="IPR036020">
    <property type="entry name" value="WW_dom_sf"/>
</dbReference>
<dbReference type="PANTHER" id="PTHR23176:SF107">
    <property type="entry name" value="RHO GTPASE-ACTIVATING PROTEIN 12"/>
    <property type="match status" value="1"/>
</dbReference>
<dbReference type="PANTHER" id="PTHR23176">
    <property type="entry name" value="RHO/RAC/CDC GTPASE-ACTIVATING PROTEIN"/>
    <property type="match status" value="1"/>
</dbReference>
<dbReference type="Pfam" id="PF00169">
    <property type="entry name" value="PH"/>
    <property type="match status" value="1"/>
</dbReference>
<dbReference type="Pfam" id="PF00620">
    <property type="entry name" value="RhoGAP"/>
    <property type="match status" value="1"/>
</dbReference>
<dbReference type="Pfam" id="PF16618">
    <property type="entry name" value="SH3-WW_linker"/>
    <property type="match status" value="1"/>
</dbReference>
<dbReference type="Pfam" id="PF00018">
    <property type="entry name" value="SH3_1"/>
    <property type="match status" value="1"/>
</dbReference>
<dbReference type="SMART" id="SM00233">
    <property type="entry name" value="PH"/>
    <property type="match status" value="1"/>
</dbReference>
<dbReference type="SMART" id="SM00324">
    <property type="entry name" value="RhoGAP"/>
    <property type="match status" value="1"/>
</dbReference>
<dbReference type="SMART" id="SM00326">
    <property type="entry name" value="SH3"/>
    <property type="match status" value="1"/>
</dbReference>
<dbReference type="SMART" id="SM00456">
    <property type="entry name" value="WW"/>
    <property type="match status" value="2"/>
</dbReference>
<dbReference type="SUPFAM" id="SSF48350">
    <property type="entry name" value="GTPase activation domain, GAP"/>
    <property type="match status" value="1"/>
</dbReference>
<dbReference type="SUPFAM" id="SSF50729">
    <property type="entry name" value="PH domain-like"/>
    <property type="match status" value="1"/>
</dbReference>
<dbReference type="SUPFAM" id="SSF50044">
    <property type="entry name" value="SH3-domain"/>
    <property type="match status" value="1"/>
</dbReference>
<dbReference type="SUPFAM" id="SSF51045">
    <property type="entry name" value="WW domain"/>
    <property type="match status" value="2"/>
</dbReference>
<dbReference type="PROSITE" id="PS50003">
    <property type="entry name" value="PH_DOMAIN"/>
    <property type="match status" value="1"/>
</dbReference>
<dbReference type="PROSITE" id="PS50238">
    <property type="entry name" value="RHOGAP"/>
    <property type="match status" value="1"/>
</dbReference>
<dbReference type="PROSITE" id="PS50002">
    <property type="entry name" value="SH3"/>
    <property type="match status" value="1"/>
</dbReference>
<dbReference type="PROSITE" id="PS50020">
    <property type="entry name" value="WW_DOMAIN_2"/>
    <property type="match status" value="2"/>
</dbReference>
<sequence>MKMADRSGKIIPGQAYIEVEYDYEYEAKDRKIVIKQGERYILVKKTNDDWWQVKPDENSKAFYVPAQYVKEVTRKALMPPVKQVAGLPNNSTKIMQSLHLQRSTENVNKLPELSSFGKPSSSVQGTGLTRDANQNFGPSYNPGHTVNLSLDLTHNNGKFNNDSHSPKVSSQNRTRLFGHFPGPEFLDVEKTSFSQEQSCDSAGEGSERIHQDSESGDELSSSSTEQIRATTPPNQGRPDSPVYANLQELKISQSALPPLPGSPAIQINGEWETHKDSSGRCYYYDRGTQERTWKPPRWTRDASISKGDFQSPGDQELLSSEENYYSTSYSQSDSQCGSPPRGWSEELDERGHTLYTSDYTNEKWLKHIDDQGRQYYYSADGSRSEWELPKYNASSQQQREIIKSRSLDRRLQEPIVLTKWRHSTIVLDTNDKESPTASKPCFPENESSPSSPKHQDTASSPKDQEKYGLLNVTKIAENGKKVRKNWLSSWAVLQGSSLLFTKTQGSSTSWFGSNQSKPEFTVDLKGATIEMASKDKSSKKNVFELKTRQGTELLIQSDNDTVINDWFKVLSSTINNQAVDTDEGIEEEILPDSPGIEKHDKEKEQKDPKKLRSFKVSSIDSSEQKKTKKNLKKFLTRRPTLQAVREKGYIKDQVFGSNLANLCQRENGTVPKFVKLCIEHVEEYGLDVDGIYRVSGNLAVIQKLRFAVNHDEKLDLNDSKWEDIHVITGALKMFFRELPEPLFTFNHFNDFVNAIKQEPRQRVAAVKDLIRQLPKPNQDTMQILFRHLKRVVENGEKNRMTYQSIAIVFGPTLLKPEKETGNIAVHTVYQNQIVELILLELSSIFGR</sequence>
<feature type="chain" id="PRO_0000056714" description="Rho GTPase-activating protein 12">
    <location>
        <begin position="1"/>
        <end position="847"/>
    </location>
</feature>
<feature type="domain" description="SH3" evidence="5">
    <location>
        <begin position="12"/>
        <end position="74"/>
    </location>
</feature>
<feature type="domain" description="WW 1" evidence="6">
    <location>
        <begin position="265"/>
        <end position="298"/>
    </location>
</feature>
<feature type="domain" description="WW 2" evidence="6">
    <location>
        <begin position="358"/>
        <end position="391"/>
    </location>
</feature>
<feature type="domain" description="PH" evidence="3">
    <location>
        <begin position="463"/>
        <end position="575"/>
    </location>
</feature>
<feature type="domain" description="Rho-GAP" evidence="4">
    <location>
        <begin position="657"/>
        <end position="845"/>
    </location>
</feature>
<feature type="region of interest" description="Disordered" evidence="7">
    <location>
        <begin position="110"/>
        <end position="241"/>
    </location>
</feature>
<feature type="region of interest" description="Disordered" evidence="7">
    <location>
        <begin position="293"/>
        <end position="317"/>
    </location>
</feature>
<feature type="region of interest" description="Disordered" evidence="7">
    <location>
        <begin position="428"/>
        <end position="466"/>
    </location>
</feature>
<feature type="region of interest" description="Disordered" evidence="7">
    <location>
        <begin position="591"/>
        <end position="625"/>
    </location>
</feature>
<feature type="compositionally biased region" description="Polar residues" evidence="7">
    <location>
        <begin position="117"/>
        <end position="174"/>
    </location>
</feature>
<feature type="compositionally biased region" description="Polar residues" evidence="7">
    <location>
        <begin position="191"/>
        <end position="200"/>
    </location>
</feature>
<feature type="compositionally biased region" description="Polar residues" evidence="7">
    <location>
        <begin position="224"/>
        <end position="234"/>
    </location>
</feature>
<feature type="compositionally biased region" description="Polar residues" evidence="7">
    <location>
        <begin position="445"/>
        <end position="461"/>
    </location>
</feature>
<feature type="compositionally biased region" description="Basic and acidic residues" evidence="7">
    <location>
        <begin position="595"/>
        <end position="610"/>
    </location>
</feature>
<feature type="site" description="Arginine finger; crucial for GTP hydrolysis by stabilizing the transition state" evidence="4">
    <location>
        <position position="693"/>
    </location>
</feature>
<feature type="modified residue" description="Phosphoserine" evidence="2">
    <location>
        <position position="165"/>
    </location>
</feature>
<feature type="modified residue" description="Phosphoserine" evidence="2">
    <location>
        <position position="201"/>
    </location>
</feature>
<feature type="modified residue" description="Phosphoserine" evidence="2">
    <location>
        <position position="213"/>
    </location>
</feature>
<feature type="modified residue" description="Phosphoserine" evidence="2">
    <location>
        <position position="215"/>
    </location>
</feature>
<feature type="modified residue" description="Phosphothreonine" evidence="2">
    <location>
        <position position="230"/>
    </location>
</feature>
<feature type="modified residue" description="Phosphothreonine" evidence="2">
    <location>
        <position position="231"/>
    </location>
</feature>
<feature type="modified residue" description="Phosphoserine" evidence="2">
    <location>
        <position position="240"/>
    </location>
</feature>
<feature type="modified residue" description="Phosphotyrosine" evidence="2">
    <location>
        <position position="243"/>
    </location>
</feature>
<feature type="modified residue" description="Phosphoserine" evidence="2">
    <location>
        <position position="593"/>
    </location>
</feature>
<comment type="function">
    <text evidence="1">GTPase activator for the Rho-type GTPases by converting them to an inactive GDP-bound state.</text>
</comment>
<evidence type="ECO:0000250" key="1"/>
<evidence type="ECO:0000250" key="2">
    <source>
        <dbReference type="UniProtKB" id="Q8IWW6"/>
    </source>
</evidence>
<evidence type="ECO:0000255" key="3">
    <source>
        <dbReference type="PROSITE-ProRule" id="PRU00145"/>
    </source>
</evidence>
<evidence type="ECO:0000255" key="4">
    <source>
        <dbReference type="PROSITE-ProRule" id="PRU00172"/>
    </source>
</evidence>
<evidence type="ECO:0000255" key="5">
    <source>
        <dbReference type="PROSITE-ProRule" id="PRU00192"/>
    </source>
</evidence>
<evidence type="ECO:0000255" key="6">
    <source>
        <dbReference type="PROSITE-ProRule" id="PRU00224"/>
    </source>
</evidence>
<evidence type="ECO:0000256" key="7">
    <source>
        <dbReference type="SAM" id="MobiDB-lite"/>
    </source>
</evidence>
<name>RHG12_MACFA</name>
<keyword id="KW-0343">GTPase activation</keyword>
<keyword id="KW-0597">Phosphoprotein</keyword>
<keyword id="KW-1185">Reference proteome</keyword>
<keyword id="KW-0677">Repeat</keyword>
<keyword id="KW-0728">SH3 domain</keyword>
<accession>Q9BE31</accession>
<protein>
    <recommendedName>
        <fullName>Rho GTPase-activating protein 12</fullName>
    </recommendedName>
    <alternativeName>
        <fullName>Rho-type GTPase-activating protein 12</fullName>
    </alternativeName>
</protein>
<organism>
    <name type="scientific">Macaca fascicularis</name>
    <name type="common">Crab-eating macaque</name>
    <name type="synonym">Cynomolgus monkey</name>
    <dbReference type="NCBI Taxonomy" id="9541"/>
    <lineage>
        <taxon>Eukaryota</taxon>
        <taxon>Metazoa</taxon>
        <taxon>Chordata</taxon>
        <taxon>Craniata</taxon>
        <taxon>Vertebrata</taxon>
        <taxon>Euteleostomi</taxon>
        <taxon>Mammalia</taxon>
        <taxon>Eutheria</taxon>
        <taxon>Euarchontoglires</taxon>
        <taxon>Primates</taxon>
        <taxon>Haplorrhini</taxon>
        <taxon>Catarrhini</taxon>
        <taxon>Cercopithecidae</taxon>
        <taxon>Cercopithecinae</taxon>
        <taxon>Macaca</taxon>
    </lineage>
</organism>
<gene>
    <name type="primary">ARHGAP12</name>
    <name type="ORF">QflA-11329</name>
</gene>
<reference key="1">
    <citation type="submission" date="2001-04" db="EMBL/GenBank/DDBJ databases">
        <title>Isolation of full-length cDNA clones from macaque brain cDNA libraries.</title>
        <authorList>
            <person name="Osada N."/>
            <person name="Hida M."/>
            <person name="Kusuda J."/>
            <person name="Tanuma R."/>
            <person name="Iseki K."/>
            <person name="Hirai M."/>
            <person name="Terao K."/>
            <person name="Suzuki Y."/>
            <person name="Sugano S."/>
            <person name="Hashimoto K."/>
        </authorList>
    </citation>
    <scope>NUCLEOTIDE SEQUENCE [LARGE SCALE MRNA]</scope>
    <source>
        <tissue>Frontal cortex</tissue>
    </source>
</reference>